<proteinExistence type="inferred from homology"/>
<gene>
    <name evidence="1" type="primary">kdsA</name>
    <name type="ordered locus">ETA_18750</name>
</gene>
<name>KDSA_ERWT9</name>
<sequence length="284" mass="30741">MKQKVVSIGDIKVANDLPFVLFGGMNVLESRDLAMRICEHYVTVTQKLGIPYVFKASFDKANRSSIHSYRGPGLEEGMKIFQEIKQAFGVKIITDVHEASQAQTVADVVDVIQLPAFLARQTDLVEAMAKTGAVINVKKPQFVSPGQMGNIVDKFAEGGNENVILCDRGANFGYDNLVVDMLGFNVMKQVSNNSPVIFDVTHALQCRDPMGAASSGRRGQVSELARAGMAVGIAGLFIEAHPDPANAKCDGPSALPLDKLEPFLLQMKAIDDLVKSFPELDTNS</sequence>
<evidence type="ECO:0000255" key="1">
    <source>
        <dbReference type="HAMAP-Rule" id="MF_00056"/>
    </source>
</evidence>
<organism>
    <name type="scientific">Erwinia tasmaniensis (strain DSM 17950 / CFBP 7177 / CIP 109463 / NCPPB 4357 / Et1/99)</name>
    <dbReference type="NCBI Taxonomy" id="465817"/>
    <lineage>
        <taxon>Bacteria</taxon>
        <taxon>Pseudomonadati</taxon>
        <taxon>Pseudomonadota</taxon>
        <taxon>Gammaproteobacteria</taxon>
        <taxon>Enterobacterales</taxon>
        <taxon>Erwiniaceae</taxon>
        <taxon>Erwinia</taxon>
    </lineage>
</organism>
<comment type="catalytic activity">
    <reaction evidence="1">
        <text>D-arabinose 5-phosphate + phosphoenolpyruvate + H2O = 3-deoxy-alpha-D-manno-2-octulosonate-8-phosphate + phosphate</text>
        <dbReference type="Rhea" id="RHEA:14053"/>
        <dbReference type="ChEBI" id="CHEBI:15377"/>
        <dbReference type="ChEBI" id="CHEBI:43474"/>
        <dbReference type="ChEBI" id="CHEBI:57693"/>
        <dbReference type="ChEBI" id="CHEBI:58702"/>
        <dbReference type="ChEBI" id="CHEBI:85985"/>
        <dbReference type="EC" id="2.5.1.55"/>
    </reaction>
</comment>
<comment type="pathway">
    <text evidence="1">Carbohydrate biosynthesis; 3-deoxy-D-manno-octulosonate biosynthesis; 3-deoxy-D-manno-octulosonate from D-ribulose 5-phosphate: step 2/3.</text>
</comment>
<comment type="pathway">
    <text evidence="1">Bacterial outer membrane biogenesis; lipopolysaccharide biosynthesis.</text>
</comment>
<comment type="subcellular location">
    <subcellularLocation>
        <location evidence="1">Cytoplasm</location>
    </subcellularLocation>
</comment>
<comment type="similarity">
    <text evidence="1">Belongs to the KdsA family.</text>
</comment>
<dbReference type="EC" id="2.5.1.55" evidence="1"/>
<dbReference type="EMBL" id="CU468135">
    <property type="protein sequence ID" value="CAO96921.1"/>
    <property type="molecule type" value="Genomic_DNA"/>
</dbReference>
<dbReference type="RefSeq" id="WP_012441605.1">
    <property type="nucleotide sequence ID" value="NC_010694.1"/>
</dbReference>
<dbReference type="SMR" id="B2VEI7"/>
<dbReference type="STRING" id="465817.ETA_18750"/>
<dbReference type="KEGG" id="eta:ETA_18750"/>
<dbReference type="eggNOG" id="COG2877">
    <property type="taxonomic scope" value="Bacteria"/>
</dbReference>
<dbReference type="HOGENOM" id="CLU_036666_0_0_6"/>
<dbReference type="OrthoDB" id="9776934at2"/>
<dbReference type="UniPathway" id="UPA00030"/>
<dbReference type="UniPathway" id="UPA00357">
    <property type="reaction ID" value="UER00474"/>
</dbReference>
<dbReference type="Proteomes" id="UP000001726">
    <property type="component" value="Chromosome"/>
</dbReference>
<dbReference type="GO" id="GO:0005737">
    <property type="term" value="C:cytoplasm"/>
    <property type="evidence" value="ECO:0007669"/>
    <property type="project" value="UniProtKB-SubCell"/>
</dbReference>
<dbReference type="GO" id="GO:0008676">
    <property type="term" value="F:3-deoxy-8-phosphooctulonate synthase activity"/>
    <property type="evidence" value="ECO:0007669"/>
    <property type="project" value="UniProtKB-UniRule"/>
</dbReference>
<dbReference type="GO" id="GO:0019294">
    <property type="term" value="P:keto-3-deoxy-D-manno-octulosonic acid biosynthetic process"/>
    <property type="evidence" value="ECO:0007669"/>
    <property type="project" value="UniProtKB-UniRule"/>
</dbReference>
<dbReference type="FunFam" id="3.20.20.70:FF:000058">
    <property type="entry name" value="2-dehydro-3-deoxyphosphooctonate aldolase"/>
    <property type="match status" value="1"/>
</dbReference>
<dbReference type="Gene3D" id="3.20.20.70">
    <property type="entry name" value="Aldolase class I"/>
    <property type="match status" value="1"/>
</dbReference>
<dbReference type="HAMAP" id="MF_00056">
    <property type="entry name" value="KDO8P_synth"/>
    <property type="match status" value="1"/>
</dbReference>
<dbReference type="InterPro" id="IPR013785">
    <property type="entry name" value="Aldolase_TIM"/>
</dbReference>
<dbReference type="InterPro" id="IPR006218">
    <property type="entry name" value="DAHP1/KDSA"/>
</dbReference>
<dbReference type="InterPro" id="IPR006269">
    <property type="entry name" value="KDO8P_synthase"/>
</dbReference>
<dbReference type="NCBIfam" id="TIGR01362">
    <property type="entry name" value="KDO8P_synth"/>
    <property type="match status" value="1"/>
</dbReference>
<dbReference type="NCBIfam" id="NF003543">
    <property type="entry name" value="PRK05198.1"/>
    <property type="match status" value="1"/>
</dbReference>
<dbReference type="NCBIfam" id="NF009109">
    <property type="entry name" value="PRK12457.1"/>
    <property type="match status" value="1"/>
</dbReference>
<dbReference type="PANTHER" id="PTHR21057">
    <property type="entry name" value="PHOSPHO-2-DEHYDRO-3-DEOXYHEPTONATE ALDOLASE"/>
    <property type="match status" value="1"/>
</dbReference>
<dbReference type="Pfam" id="PF00793">
    <property type="entry name" value="DAHP_synth_1"/>
    <property type="match status" value="1"/>
</dbReference>
<dbReference type="SUPFAM" id="SSF51569">
    <property type="entry name" value="Aldolase"/>
    <property type="match status" value="1"/>
</dbReference>
<keyword id="KW-0963">Cytoplasm</keyword>
<keyword id="KW-0448">Lipopolysaccharide biosynthesis</keyword>
<keyword id="KW-1185">Reference proteome</keyword>
<keyword id="KW-0808">Transferase</keyword>
<feature type="chain" id="PRO_1000091815" description="2-dehydro-3-deoxyphosphooctonate aldolase">
    <location>
        <begin position="1"/>
        <end position="284"/>
    </location>
</feature>
<reference key="1">
    <citation type="journal article" date="2008" name="Environ. Microbiol.">
        <title>The genome of Erwinia tasmaniensis strain Et1/99, a non-pathogenic bacterium in the genus Erwinia.</title>
        <authorList>
            <person name="Kube M."/>
            <person name="Migdoll A.M."/>
            <person name="Mueller I."/>
            <person name="Kuhl H."/>
            <person name="Beck A."/>
            <person name="Reinhardt R."/>
            <person name="Geider K."/>
        </authorList>
    </citation>
    <scope>NUCLEOTIDE SEQUENCE [LARGE SCALE GENOMIC DNA]</scope>
    <source>
        <strain>DSM 17950 / CFBP 7177 / CIP 109463 / NCPPB 4357 / Et1/99</strain>
    </source>
</reference>
<protein>
    <recommendedName>
        <fullName evidence="1">2-dehydro-3-deoxyphosphooctonate aldolase</fullName>
        <ecNumber evidence="1">2.5.1.55</ecNumber>
    </recommendedName>
    <alternativeName>
        <fullName evidence="1">3-deoxy-D-manno-octulosonic acid 8-phosphate synthase</fullName>
    </alternativeName>
    <alternativeName>
        <fullName evidence="1">KDO-8-phosphate synthase</fullName>
        <shortName evidence="1">KDO 8-P synthase</shortName>
        <shortName evidence="1">KDOPS</shortName>
    </alternativeName>
    <alternativeName>
        <fullName evidence="1">Phospho-2-dehydro-3-deoxyoctonate aldolase</fullName>
    </alternativeName>
</protein>
<accession>B2VEI7</accession>